<accession>B2TWA2</accession>
<proteinExistence type="inferred from homology"/>
<dbReference type="EC" id="1.1.1.290" evidence="1"/>
<dbReference type="EMBL" id="CP001063">
    <property type="protein sequence ID" value="ACD07262.1"/>
    <property type="molecule type" value="Genomic_DNA"/>
</dbReference>
<dbReference type="RefSeq" id="WP_000699121.1">
    <property type="nucleotide sequence ID" value="NC_010658.1"/>
</dbReference>
<dbReference type="SMR" id="B2TWA2"/>
<dbReference type="STRING" id="344609.SbBS512_E2698"/>
<dbReference type="GeneID" id="93774854"/>
<dbReference type="KEGG" id="sbc:SbBS512_E2698"/>
<dbReference type="HOGENOM" id="CLU_019796_4_0_6"/>
<dbReference type="UniPathway" id="UPA00244">
    <property type="reaction ID" value="UER00310"/>
</dbReference>
<dbReference type="Proteomes" id="UP000001030">
    <property type="component" value="Chromosome"/>
</dbReference>
<dbReference type="GO" id="GO:0005829">
    <property type="term" value="C:cytosol"/>
    <property type="evidence" value="ECO:0007669"/>
    <property type="project" value="TreeGrafter"/>
</dbReference>
<dbReference type="GO" id="GO:0033711">
    <property type="term" value="F:4-phosphoerythronate dehydrogenase activity"/>
    <property type="evidence" value="ECO:0007669"/>
    <property type="project" value="UniProtKB-EC"/>
</dbReference>
<dbReference type="GO" id="GO:0051287">
    <property type="term" value="F:NAD binding"/>
    <property type="evidence" value="ECO:0007669"/>
    <property type="project" value="InterPro"/>
</dbReference>
<dbReference type="GO" id="GO:0046983">
    <property type="term" value="F:protein dimerization activity"/>
    <property type="evidence" value="ECO:0007669"/>
    <property type="project" value="InterPro"/>
</dbReference>
<dbReference type="GO" id="GO:0036001">
    <property type="term" value="P:'de novo' pyridoxal 5'-phosphate biosynthetic process"/>
    <property type="evidence" value="ECO:0007669"/>
    <property type="project" value="TreeGrafter"/>
</dbReference>
<dbReference type="GO" id="GO:0008615">
    <property type="term" value="P:pyridoxine biosynthetic process"/>
    <property type="evidence" value="ECO:0007669"/>
    <property type="project" value="UniProtKB-UniRule"/>
</dbReference>
<dbReference type="CDD" id="cd12158">
    <property type="entry name" value="ErythrP_dh"/>
    <property type="match status" value="1"/>
</dbReference>
<dbReference type="FunFam" id="3.30.1370.170:FF:000001">
    <property type="entry name" value="Erythronate-4-phosphate dehydrogenase"/>
    <property type="match status" value="1"/>
</dbReference>
<dbReference type="FunFam" id="3.40.50.720:FF:000093">
    <property type="entry name" value="Erythronate-4-phosphate dehydrogenase"/>
    <property type="match status" value="1"/>
</dbReference>
<dbReference type="Gene3D" id="3.30.1370.170">
    <property type="match status" value="1"/>
</dbReference>
<dbReference type="Gene3D" id="3.40.50.720">
    <property type="entry name" value="NAD(P)-binding Rossmann-like Domain"/>
    <property type="match status" value="2"/>
</dbReference>
<dbReference type="HAMAP" id="MF_01825">
    <property type="entry name" value="PdxB"/>
    <property type="match status" value="1"/>
</dbReference>
<dbReference type="InterPro" id="IPR006139">
    <property type="entry name" value="D-isomer_2_OHA_DH_cat_dom"/>
</dbReference>
<dbReference type="InterPro" id="IPR029753">
    <property type="entry name" value="D-isomer_DH_CS"/>
</dbReference>
<dbReference type="InterPro" id="IPR029752">
    <property type="entry name" value="D-isomer_DH_CS1"/>
</dbReference>
<dbReference type="InterPro" id="IPR006140">
    <property type="entry name" value="D-isomer_DH_NAD-bd"/>
</dbReference>
<dbReference type="InterPro" id="IPR020921">
    <property type="entry name" value="Erythronate-4-P_DHase"/>
</dbReference>
<dbReference type="InterPro" id="IPR024531">
    <property type="entry name" value="Erythronate-4-P_DHase_dimer"/>
</dbReference>
<dbReference type="InterPro" id="IPR036291">
    <property type="entry name" value="NAD(P)-bd_dom_sf"/>
</dbReference>
<dbReference type="InterPro" id="IPR038251">
    <property type="entry name" value="PdxB_dimer_sf"/>
</dbReference>
<dbReference type="NCBIfam" id="NF001309">
    <property type="entry name" value="PRK00257.1"/>
    <property type="match status" value="1"/>
</dbReference>
<dbReference type="NCBIfam" id="NF011966">
    <property type="entry name" value="PRK15438.1"/>
    <property type="match status" value="1"/>
</dbReference>
<dbReference type="PANTHER" id="PTHR42938">
    <property type="entry name" value="FORMATE DEHYDROGENASE 1"/>
    <property type="match status" value="1"/>
</dbReference>
<dbReference type="PANTHER" id="PTHR42938:SF9">
    <property type="entry name" value="FORMATE DEHYDROGENASE 1"/>
    <property type="match status" value="1"/>
</dbReference>
<dbReference type="Pfam" id="PF00389">
    <property type="entry name" value="2-Hacid_dh"/>
    <property type="match status" value="1"/>
</dbReference>
<dbReference type="Pfam" id="PF02826">
    <property type="entry name" value="2-Hacid_dh_C"/>
    <property type="match status" value="1"/>
</dbReference>
<dbReference type="Pfam" id="PF11890">
    <property type="entry name" value="DUF3410"/>
    <property type="match status" value="1"/>
</dbReference>
<dbReference type="SUPFAM" id="SSF52283">
    <property type="entry name" value="Formate/glycerate dehydrogenase catalytic domain-like"/>
    <property type="match status" value="1"/>
</dbReference>
<dbReference type="SUPFAM" id="SSF51735">
    <property type="entry name" value="NAD(P)-binding Rossmann-fold domains"/>
    <property type="match status" value="1"/>
</dbReference>
<dbReference type="PROSITE" id="PS00065">
    <property type="entry name" value="D_2_HYDROXYACID_DH_1"/>
    <property type="match status" value="1"/>
</dbReference>
<dbReference type="PROSITE" id="PS00671">
    <property type="entry name" value="D_2_HYDROXYACID_DH_3"/>
    <property type="match status" value="1"/>
</dbReference>
<sequence>MKILVDENMPYARDLFSRLGEVTAVPGRPIPVAQLADADALMVRSVTKVNESLLAGKPIKFVGTATAGTDHVDEAWLKQAGIGFSAAPGCNAIAVVEYVFSSLLMLAERDGFSLHDRTVGIVGVGNVGRRLQARLEALGIKTLLCDPPRADRGDEGDFRSLDELVQHADILTFHTPLFKDGPYKTLHLADEKLIRSLKPGAILINACRGAVVDNTALLTCLNEGQKLSVVLDVWEGEPELNVELLTKVDIGTPHIAGYTLEGKARGTTQVFEAYSKFIGHEQHVALDTLLPAPEFGRITLHGPLDQPTLKRLVHLVYDVRRDDAPLRKVAGIPGEFDKLRKNYLERREWSSLYVICDDASAASLLCKLGFNAVHHPAR</sequence>
<organism>
    <name type="scientific">Shigella boydii serotype 18 (strain CDC 3083-94 / BS512)</name>
    <dbReference type="NCBI Taxonomy" id="344609"/>
    <lineage>
        <taxon>Bacteria</taxon>
        <taxon>Pseudomonadati</taxon>
        <taxon>Pseudomonadota</taxon>
        <taxon>Gammaproteobacteria</taxon>
        <taxon>Enterobacterales</taxon>
        <taxon>Enterobacteriaceae</taxon>
        <taxon>Shigella</taxon>
    </lineage>
</organism>
<name>PDXB_SHIB3</name>
<reference key="1">
    <citation type="submission" date="2008-05" db="EMBL/GenBank/DDBJ databases">
        <title>Complete sequence of Shigella boydii serotype 18 strain BS512.</title>
        <authorList>
            <person name="Rasko D.A."/>
            <person name="Rosovitz M."/>
            <person name="Maurelli A.T."/>
            <person name="Myers G."/>
            <person name="Seshadri R."/>
            <person name="Cer R."/>
            <person name="Jiang L."/>
            <person name="Ravel J."/>
            <person name="Sebastian Y."/>
        </authorList>
    </citation>
    <scope>NUCLEOTIDE SEQUENCE [LARGE SCALE GENOMIC DNA]</scope>
    <source>
        <strain>CDC 3083-94 / BS512</strain>
    </source>
</reference>
<comment type="function">
    <text evidence="1">Catalyzes the oxidation of erythronate-4-phosphate to 3-hydroxy-2-oxo-4-phosphonooxybutanoate.</text>
</comment>
<comment type="catalytic activity">
    <reaction evidence="1">
        <text>4-phospho-D-erythronate + NAD(+) = (R)-3-hydroxy-2-oxo-4-phosphooxybutanoate + NADH + H(+)</text>
        <dbReference type="Rhea" id="RHEA:18829"/>
        <dbReference type="ChEBI" id="CHEBI:15378"/>
        <dbReference type="ChEBI" id="CHEBI:57540"/>
        <dbReference type="ChEBI" id="CHEBI:57945"/>
        <dbReference type="ChEBI" id="CHEBI:58538"/>
        <dbReference type="ChEBI" id="CHEBI:58766"/>
        <dbReference type="EC" id="1.1.1.290"/>
    </reaction>
</comment>
<comment type="pathway">
    <text evidence="1">Cofactor biosynthesis; pyridoxine 5'-phosphate biosynthesis; pyridoxine 5'-phosphate from D-erythrose 4-phosphate: step 2/5.</text>
</comment>
<comment type="subunit">
    <text evidence="1">Homodimer.</text>
</comment>
<comment type="subcellular location">
    <subcellularLocation>
        <location evidence="1">Cytoplasm</location>
    </subcellularLocation>
</comment>
<comment type="similarity">
    <text evidence="1">Belongs to the D-isomer specific 2-hydroxyacid dehydrogenase family. PdxB subfamily.</text>
</comment>
<protein>
    <recommendedName>
        <fullName evidence="1">Erythronate-4-phosphate dehydrogenase</fullName>
        <ecNumber evidence="1">1.1.1.290</ecNumber>
    </recommendedName>
</protein>
<gene>
    <name evidence="1" type="primary">pdxB</name>
    <name type="ordered locus">SbBS512_E2698</name>
</gene>
<evidence type="ECO:0000255" key="1">
    <source>
        <dbReference type="HAMAP-Rule" id="MF_01825"/>
    </source>
</evidence>
<keyword id="KW-0963">Cytoplasm</keyword>
<keyword id="KW-0520">NAD</keyword>
<keyword id="KW-0560">Oxidoreductase</keyword>
<keyword id="KW-0664">Pyridoxine biosynthesis</keyword>
<keyword id="KW-1185">Reference proteome</keyword>
<feature type="chain" id="PRO_1000188285" description="Erythronate-4-phosphate dehydrogenase">
    <location>
        <begin position="1"/>
        <end position="378"/>
    </location>
</feature>
<feature type="active site" evidence="1">
    <location>
        <position position="208"/>
    </location>
</feature>
<feature type="active site" evidence="1">
    <location>
        <position position="237"/>
    </location>
</feature>
<feature type="active site" description="Proton donor" evidence="1">
    <location>
        <position position="254"/>
    </location>
</feature>
<feature type="binding site" evidence="1">
    <location>
        <position position="45"/>
    </location>
    <ligand>
        <name>substrate</name>
    </ligand>
</feature>
<feature type="binding site" evidence="1">
    <location>
        <position position="66"/>
    </location>
    <ligand>
        <name>substrate</name>
    </ligand>
</feature>
<feature type="binding site" evidence="1">
    <location>
        <position position="146"/>
    </location>
    <ligand>
        <name>NAD(+)</name>
        <dbReference type="ChEBI" id="CHEBI:57540"/>
    </ligand>
</feature>
<feature type="binding site" evidence="1">
    <location>
        <position position="175"/>
    </location>
    <ligand>
        <name>NAD(+)</name>
        <dbReference type="ChEBI" id="CHEBI:57540"/>
    </ligand>
</feature>
<feature type="binding site" evidence="1">
    <location>
        <position position="232"/>
    </location>
    <ligand>
        <name>NAD(+)</name>
        <dbReference type="ChEBI" id="CHEBI:57540"/>
    </ligand>
</feature>
<feature type="binding site" evidence="1">
    <location>
        <position position="257"/>
    </location>
    <ligand>
        <name>NAD(+)</name>
        <dbReference type="ChEBI" id="CHEBI:57540"/>
    </ligand>
</feature>
<feature type="binding site" evidence="1">
    <location>
        <position position="258"/>
    </location>
    <ligand>
        <name>substrate</name>
    </ligand>
</feature>